<keyword id="KW-0274">FAD</keyword>
<keyword id="KW-0285">Flavoprotein</keyword>
<keyword id="KW-0489">Methyltransferase</keyword>
<keyword id="KW-0521">NADP</keyword>
<keyword id="KW-0545">Nucleotide biosynthesis</keyword>
<keyword id="KW-1185">Reference proteome</keyword>
<keyword id="KW-0808">Transferase</keyword>
<gene>
    <name evidence="1" type="primary">thyX</name>
    <name type="ordered locus">DIP1465</name>
</gene>
<name>THYX_CORDI</name>
<proteinExistence type="inferred from homology"/>
<sequence>MAQQSLLDVQLVACSTFTTPSGVDWKVDSAATDSEALVEFAGRACYETFDKPNPRTAANDAYIRHIMEVGHMALLEHPTATVYIRGLSRSATHELVRHRHFSFSQLSQRFVHSDETHVVIPPLIDNDPQLRELFLSTVDEVRFAYSELMTALDNKLADEPNAILRRKQARQAARSILPNATESRIVVTGNFRAWRHFIGMRATEHADVEIRSLAVRCLEILKEKAPTVFSDFETSVLSDGSIMATSPYVTDY</sequence>
<feature type="chain" id="PRO_0000175558" description="Flavin-dependent thymidylate synthase">
    <location>
        <begin position="1"/>
        <end position="252"/>
    </location>
</feature>
<feature type="domain" description="ThyX" evidence="2">
    <location>
        <begin position="7"/>
        <end position="235"/>
    </location>
</feature>
<feature type="short sequence motif" description="ThyX motif" evidence="1">
    <location>
        <begin position="97"/>
        <end position="107"/>
    </location>
</feature>
<feature type="active site" description="Involved in ionization of N3 of dUMP, leading to its activation" evidence="1">
    <location>
        <position position="201"/>
    </location>
</feature>
<feature type="binding site" evidence="1">
    <location>
        <begin position="94"/>
        <end position="97"/>
    </location>
    <ligand>
        <name>dUMP</name>
        <dbReference type="ChEBI" id="CHEBI:246422"/>
        <note>ligand shared between dimeric partners</note>
    </ligand>
</feature>
<feature type="binding site" evidence="1">
    <location>
        <begin position="97"/>
        <end position="99"/>
    </location>
    <ligand>
        <name>FAD</name>
        <dbReference type="ChEBI" id="CHEBI:57692"/>
        <note>ligand shared between neighboring subunits</note>
    </ligand>
</feature>
<feature type="binding site" description="in other chain" evidence="1">
    <location>
        <begin position="105"/>
        <end position="109"/>
    </location>
    <ligand>
        <name>dUMP</name>
        <dbReference type="ChEBI" id="CHEBI:246422"/>
        <note>ligand shared between dimeric partners</note>
    </ligand>
</feature>
<feature type="binding site" evidence="1">
    <location>
        <position position="105"/>
    </location>
    <ligand>
        <name>FAD</name>
        <dbReference type="ChEBI" id="CHEBI:57692"/>
        <note>ligand shared between neighboring subunits</note>
    </ligand>
</feature>
<feature type="binding site" description="in other chain" evidence="1">
    <location>
        <position position="174"/>
    </location>
    <ligand>
        <name>dUMP</name>
        <dbReference type="ChEBI" id="CHEBI:246422"/>
        <note>ligand shared between dimeric partners</note>
    </ligand>
</feature>
<feature type="binding site" evidence="1">
    <location>
        <begin position="190"/>
        <end position="192"/>
    </location>
    <ligand>
        <name>FAD</name>
        <dbReference type="ChEBI" id="CHEBI:57692"/>
        <note>ligand shared between neighboring subunits</note>
    </ligand>
</feature>
<feature type="binding site" evidence="1">
    <location>
        <position position="196"/>
    </location>
    <ligand>
        <name>FAD</name>
        <dbReference type="ChEBI" id="CHEBI:57692"/>
        <note>ligand shared between neighboring subunits</note>
    </ligand>
</feature>
<feature type="binding site" evidence="1">
    <location>
        <position position="201"/>
    </location>
    <ligand>
        <name>dUMP</name>
        <dbReference type="ChEBI" id="CHEBI:246422"/>
        <note>ligand shared between dimeric partners</note>
    </ligand>
</feature>
<protein>
    <recommendedName>
        <fullName evidence="1">Flavin-dependent thymidylate synthase</fullName>
        <shortName evidence="1">FDTS</shortName>
        <ecNumber evidence="1">2.1.1.148</ecNumber>
    </recommendedName>
    <alternativeName>
        <fullName evidence="1">FAD-dependent thymidylate synthase</fullName>
    </alternativeName>
    <alternativeName>
        <fullName evidence="1">Thymidylate synthase ThyX</fullName>
        <shortName evidence="1">TS</shortName>
        <shortName evidence="1">TSase</shortName>
    </alternativeName>
</protein>
<organism>
    <name type="scientific">Corynebacterium diphtheriae (strain ATCC 700971 / NCTC 13129 / Biotype gravis)</name>
    <dbReference type="NCBI Taxonomy" id="257309"/>
    <lineage>
        <taxon>Bacteria</taxon>
        <taxon>Bacillati</taxon>
        <taxon>Actinomycetota</taxon>
        <taxon>Actinomycetes</taxon>
        <taxon>Mycobacteriales</taxon>
        <taxon>Corynebacteriaceae</taxon>
        <taxon>Corynebacterium</taxon>
    </lineage>
</organism>
<dbReference type="EC" id="2.1.1.148" evidence="1"/>
<dbReference type="EMBL" id="BX248358">
    <property type="protein sequence ID" value="CAE49993.1"/>
    <property type="molecule type" value="Genomic_DNA"/>
</dbReference>
<dbReference type="RefSeq" id="WP_010935084.1">
    <property type="nucleotide sequence ID" value="NC_002935.2"/>
</dbReference>
<dbReference type="SMR" id="Q6NGP3"/>
<dbReference type="STRING" id="257309.DIP1465"/>
<dbReference type="KEGG" id="cdi:DIP1465"/>
<dbReference type="HOGENOM" id="CLU_077585_1_0_11"/>
<dbReference type="UniPathway" id="UPA00575"/>
<dbReference type="Proteomes" id="UP000002198">
    <property type="component" value="Chromosome"/>
</dbReference>
<dbReference type="GO" id="GO:0050660">
    <property type="term" value="F:flavin adenine dinucleotide binding"/>
    <property type="evidence" value="ECO:0007669"/>
    <property type="project" value="InterPro"/>
</dbReference>
<dbReference type="GO" id="GO:0070402">
    <property type="term" value="F:NADPH binding"/>
    <property type="evidence" value="ECO:0007669"/>
    <property type="project" value="TreeGrafter"/>
</dbReference>
<dbReference type="GO" id="GO:0050797">
    <property type="term" value="F:thymidylate synthase (FAD) activity"/>
    <property type="evidence" value="ECO:0007669"/>
    <property type="project" value="UniProtKB-UniRule"/>
</dbReference>
<dbReference type="GO" id="GO:0004799">
    <property type="term" value="F:thymidylate synthase activity"/>
    <property type="evidence" value="ECO:0007669"/>
    <property type="project" value="TreeGrafter"/>
</dbReference>
<dbReference type="GO" id="GO:0006231">
    <property type="term" value="P:dTMP biosynthetic process"/>
    <property type="evidence" value="ECO:0007669"/>
    <property type="project" value="UniProtKB-UniRule"/>
</dbReference>
<dbReference type="GO" id="GO:0006235">
    <property type="term" value="P:dTTP biosynthetic process"/>
    <property type="evidence" value="ECO:0007669"/>
    <property type="project" value="UniProtKB-UniRule"/>
</dbReference>
<dbReference type="GO" id="GO:0032259">
    <property type="term" value="P:methylation"/>
    <property type="evidence" value="ECO:0007669"/>
    <property type="project" value="UniProtKB-KW"/>
</dbReference>
<dbReference type="CDD" id="cd20175">
    <property type="entry name" value="ThyX"/>
    <property type="match status" value="1"/>
</dbReference>
<dbReference type="Gene3D" id="3.30.1360.170">
    <property type="match status" value="1"/>
</dbReference>
<dbReference type="Gene3D" id="3.30.70.3180">
    <property type="match status" value="1"/>
</dbReference>
<dbReference type="HAMAP" id="MF_01408">
    <property type="entry name" value="ThyX"/>
    <property type="match status" value="1"/>
</dbReference>
<dbReference type="InterPro" id="IPR003669">
    <property type="entry name" value="Thymidylate_synthase_ThyX"/>
</dbReference>
<dbReference type="InterPro" id="IPR036098">
    <property type="entry name" value="Thymidylate_synthase_ThyX_sf"/>
</dbReference>
<dbReference type="NCBIfam" id="TIGR02170">
    <property type="entry name" value="thyX"/>
    <property type="match status" value="1"/>
</dbReference>
<dbReference type="PANTHER" id="PTHR34934">
    <property type="entry name" value="FLAVIN-DEPENDENT THYMIDYLATE SYNTHASE"/>
    <property type="match status" value="1"/>
</dbReference>
<dbReference type="PANTHER" id="PTHR34934:SF1">
    <property type="entry name" value="FLAVIN-DEPENDENT THYMIDYLATE SYNTHASE"/>
    <property type="match status" value="1"/>
</dbReference>
<dbReference type="Pfam" id="PF02511">
    <property type="entry name" value="Thy1"/>
    <property type="match status" value="1"/>
</dbReference>
<dbReference type="SUPFAM" id="SSF69796">
    <property type="entry name" value="Thymidylate synthase-complementing protein Thy1"/>
    <property type="match status" value="1"/>
</dbReference>
<dbReference type="PROSITE" id="PS51331">
    <property type="entry name" value="THYX"/>
    <property type="match status" value="1"/>
</dbReference>
<evidence type="ECO:0000255" key="1">
    <source>
        <dbReference type="HAMAP-Rule" id="MF_01408"/>
    </source>
</evidence>
<evidence type="ECO:0000255" key="2">
    <source>
        <dbReference type="PROSITE-ProRule" id="PRU00661"/>
    </source>
</evidence>
<comment type="function">
    <text evidence="1">Catalyzes the reductive methylation of 2'-deoxyuridine-5'-monophosphate (dUMP) to 2'-deoxythymidine-5'-monophosphate (dTMP) while utilizing 5,10-methylenetetrahydrofolate (mTHF) as the methyl donor, and NADPH and FADH(2) as the reductant.</text>
</comment>
<comment type="catalytic activity">
    <reaction evidence="1">
        <text>dUMP + (6R)-5,10-methylene-5,6,7,8-tetrahydrofolate + NADPH + H(+) = dTMP + (6S)-5,6,7,8-tetrahydrofolate + NADP(+)</text>
        <dbReference type="Rhea" id="RHEA:29043"/>
        <dbReference type="ChEBI" id="CHEBI:15378"/>
        <dbReference type="ChEBI" id="CHEBI:15636"/>
        <dbReference type="ChEBI" id="CHEBI:57453"/>
        <dbReference type="ChEBI" id="CHEBI:57783"/>
        <dbReference type="ChEBI" id="CHEBI:58349"/>
        <dbReference type="ChEBI" id="CHEBI:63528"/>
        <dbReference type="ChEBI" id="CHEBI:246422"/>
        <dbReference type="EC" id="2.1.1.148"/>
    </reaction>
</comment>
<comment type="cofactor">
    <cofactor evidence="1">
        <name>FAD</name>
        <dbReference type="ChEBI" id="CHEBI:57692"/>
    </cofactor>
    <text evidence="1">Binds 4 FAD per tetramer. Each FAD binding site is formed by three monomers.</text>
</comment>
<comment type="pathway">
    <text evidence="1">Pyrimidine metabolism; dTTP biosynthesis.</text>
</comment>
<comment type="subunit">
    <text evidence="1">Homotetramer.</text>
</comment>
<comment type="similarity">
    <text evidence="1">Belongs to the thymidylate synthase ThyX family.</text>
</comment>
<accession>Q6NGP3</accession>
<reference key="1">
    <citation type="journal article" date="2003" name="Nucleic Acids Res.">
        <title>The complete genome sequence and analysis of Corynebacterium diphtheriae NCTC13129.</title>
        <authorList>
            <person name="Cerdeno-Tarraga A.-M."/>
            <person name="Efstratiou A."/>
            <person name="Dover L.G."/>
            <person name="Holden M.T.G."/>
            <person name="Pallen M.J."/>
            <person name="Bentley S.D."/>
            <person name="Besra G.S."/>
            <person name="Churcher C.M."/>
            <person name="James K.D."/>
            <person name="De Zoysa A."/>
            <person name="Chillingworth T."/>
            <person name="Cronin A."/>
            <person name="Dowd L."/>
            <person name="Feltwell T."/>
            <person name="Hamlin N."/>
            <person name="Holroyd S."/>
            <person name="Jagels K."/>
            <person name="Moule S."/>
            <person name="Quail M.A."/>
            <person name="Rabbinowitsch E."/>
            <person name="Rutherford K.M."/>
            <person name="Thomson N.R."/>
            <person name="Unwin L."/>
            <person name="Whitehead S."/>
            <person name="Barrell B.G."/>
            <person name="Parkhill J."/>
        </authorList>
    </citation>
    <scope>NUCLEOTIDE SEQUENCE [LARGE SCALE GENOMIC DNA]</scope>
    <source>
        <strain>ATCC 700971 / NCTC 13129 / Biotype gravis</strain>
    </source>
</reference>